<feature type="chain" id="PRO_0000219836" description="Light-independent protochlorophyllide reductase subunit B">
    <location>
        <begin position="1" status="less than"/>
        <end position="104" status="greater than"/>
    </location>
</feature>
<feature type="non-terminal residue">
    <location>
        <position position="1"/>
    </location>
</feature>
<feature type="non-terminal residue">
    <location>
        <position position="104"/>
    </location>
</feature>
<organism>
    <name type="scientific">Picea mariana</name>
    <name type="common">Black spruce</name>
    <name type="synonym">Abies mariana</name>
    <dbReference type="NCBI Taxonomy" id="3335"/>
    <lineage>
        <taxon>Eukaryota</taxon>
        <taxon>Viridiplantae</taxon>
        <taxon>Streptophyta</taxon>
        <taxon>Embryophyta</taxon>
        <taxon>Tracheophyta</taxon>
        <taxon>Spermatophyta</taxon>
        <taxon>Pinopsida</taxon>
        <taxon>Pinidae</taxon>
        <taxon>Conifers I</taxon>
        <taxon>Pinales</taxon>
        <taxon>Pinaceae</taxon>
        <taxon>Picea</taxon>
    </lineage>
</organism>
<reference key="1">
    <citation type="journal article" date="1996" name="Mol. Phylogenet. Evol.">
        <title>Phylogenetic inferences from chloroplast chlB gene sequences of Nephrolepis exaltata (Filicopsida), Ephedra altissima (Gnetopsida), and diverse land plants.</title>
        <authorList>
            <person name="Boivin R."/>
            <person name="Richard M."/>
            <person name="Beauseigle D."/>
            <person name="Bousquet J."/>
            <person name="Bellemare G."/>
        </authorList>
    </citation>
    <scope>NUCLEOTIDE SEQUENCE [GENOMIC DNA]</scope>
</reference>
<evidence type="ECO:0000250" key="1"/>
<evidence type="ECO:0000305" key="2"/>
<geneLocation type="chloroplast"/>
<comment type="function">
    <text evidence="1">Component of the dark-operative protochlorophyllide reductase (DPOR) that uses Mg-ATP and reduced ferredoxin to reduce ring D of protochlorophyllide (Pchlide) to form chlorophyllide a (Chlide). This reaction is light-independent. The NB-protein (ChlN-ChlB) is the catalytic component of the complex (By similarity).</text>
</comment>
<comment type="catalytic activity">
    <reaction>
        <text>chlorophyllide a + oxidized 2[4Fe-4S]-[ferredoxin] + 2 ADP + 2 phosphate = protochlorophyllide a + reduced 2[4Fe-4S]-[ferredoxin] + 2 ATP + 2 H2O</text>
        <dbReference type="Rhea" id="RHEA:28202"/>
        <dbReference type="Rhea" id="RHEA-COMP:10002"/>
        <dbReference type="Rhea" id="RHEA-COMP:10004"/>
        <dbReference type="ChEBI" id="CHEBI:15377"/>
        <dbReference type="ChEBI" id="CHEBI:30616"/>
        <dbReference type="ChEBI" id="CHEBI:33722"/>
        <dbReference type="ChEBI" id="CHEBI:33723"/>
        <dbReference type="ChEBI" id="CHEBI:43474"/>
        <dbReference type="ChEBI" id="CHEBI:83348"/>
        <dbReference type="ChEBI" id="CHEBI:83350"/>
        <dbReference type="ChEBI" id="CHEBI:456216"/>
        <dbReference type="EC" id="1.3.7.7"/>
    </reaction>
</comment>
<comment type="cofactor">
    <cofactor evidence="1">
        <name>[4Fe-4S] cluster</name>
        <dbReference type="ChEBI" id="CHEBI:49883"/>
    </cofactor>
    <text evidence="1">Binds 1 [4Fe-4S] cluster per heterodimer. The cluster is bound at the heterodimer interface by residues from both subunits.</text>
</comment>
<comment type="pathway">
    <text>Porphyrin-containing compound metabolism; chlorophyll biosynthesis (light-independent).</text>
</comment>
<comment type="subunit">
    <text evidence="1">Protochlorophyllide reductase is composed of three subunits; ChlL, ChlN and ChlB. Forms a heterotetramer of two ChlB and two ChlN subunits (By similarity).</text>
</comment>
<comment type="subcellular location">
    <subcellularLocation>
        <location>Plastid</location>
        <location>Chloroplast</location>
    </subcellularLocation>
</comment>
<comment type="similarity">
    <text evidence="2">Belongs to the ChlB/BchB/BchZ family.</text>
</comment>
<proteinExistence type="inferred from homology"/>
<keyword id="KW-0004">4Fe-4S</keyword>
<keyword id="KW-0067">ATP-binding</keyword>
<keyword id="KW-0149">Chlorophyll biosynthesis</keyword>
<keyword id="KW-0150">Chloroplast</keyword>
<keyword id="KW-0408">Iron</keyword>
<keyword id="KW-0411">Iron-sulfur</keyword>
<keyword id="KW-0479">Metal-binding</keyword>
<keyword id="KW-0547">Nucleotide-binding</keyword>
<keyword id="KW-0560">Oxidoreductase</keyword>
<keyword id="KW-0602">Photosynthesis</keyword>
<keyword id="KW-0934">Plastid</keyword>
<gene>
    <name type="primary">chlB</name>
</gene>
<name>CHLB_PICMA</name>
<sequence>RRLLKDLDIRINQIIPEGGSVEDSKNLPKARFNLIPYREVGLMTAMYLNKEFGMPYVSTTPMGAVDMAECIRQIKKYIDTLAAPILSSKRVDYESYIDGQTRFV</sequence>
<dbReference type="EC" id="1.3.7.7"/>
<dbReference type="EMBL" id="L25773">
    <property type="protein sequence ID" value="AAC37493.1"/>
    <property type="molecule type" value="Genomic_DNA"/>
</dbReference>
<dbReference type="SMR" id="P37853"/>
<dbReference type="UniPathway" id="UPA00670"/>
<dbReference type="GO" id="GO:0009507">
    <property type="term" value="C:chloroplast"/>
    <property type="evidence" value="ECO:0007669"/>
    <property type="project" value="UniProtKB-SubCell"/>
</dbReference>
<dbReference type="GO" id="GO:0051539">
    <property type="term" value="F:4 iron, 4 sulfur cluster binding"/>
    <property type="evidence" value="ECO:0007669"/>
    <property type="project" value="UniProtKB-KW"/>
</dbReference>
<dbReference type="GO" id="GO:0005524">
    <property type="term" value="F:ATP binding"/>
    <property type="evidence" value="ECO:0007669"/>
    <property type="project" value="UniProtKB-KW"/>
</dbReference>
<dbReference type="GO" id="GO:0046872">
    <property type="term" value="F:metal ion binding"/>
    <property type="evidence" value="ECO:0007669"/>
    <property type="project" value="UniProtKB-KW"/>
</dbReference>
<dbReference type="GO" id="GO:0016491">
    <property type="term" value="F:oxidoreductase activity"/>
    <property type="evidence" value="ECO:0007669"/>
    <property type="project" value="UniProtKB-KW"/>
</dbReference>
<dbReference type="GO" id="GO:0036068">
    <property type="term" value="P:light-independent chlorophyll biosynthetic process"/>
    <property type="evidence" value="ECO:0007669"/>
    <property type="project" value="UniProtKB-UniPathway"/>
</dbReference>
<dbReference type="GO" id="GO:0015979">
    <property type="term" value="P:photosynthesis"/>
    <property type="evidence" value="ECO:0007669"/>
    <property type="project" value="UniProtKB-KW"/>
</dbReference>
<dbReference type="Gene3D" id="3.40.50.1980">
    <property type="entry name" value="Nitrogenase molybdenum iron protein domain"/>
    <property type="match status" value="1"/>
</dbReference>
<dbReference type="InterPro" id="IPR050152">
    <property type="entry name" value="ChlB/BchB/BchZ"/>
</dbReference>
<dbReference type="InterPro" id="IPR000510">
    <property type="entry name" value="Nase/OxRdtase_comp1"/>
</dbReference>
<dbReference type="PANTHER" id="PTHR33712">
    <property type="entry name" value="LIGHT-INDEPENDENT PROTOCHLOROPHYLLIDE REDUCTASE SUBUNIT B"/>
    <property type="match status" value="1"/>
</dbReference>
<dbReference type="PANTHER" id="PTHR33712:SF7">
    <property type="entry name" value="LIGHT-INDEPENDENT PROTOCHLOROPHYLLIDE REDUCTASE SUBUNIT B"/>
    <property type="match status" value="1"/>
</dbReference>
<dbReference type="Pfam" id="PF00148">
    <property type="entry name" value="Oxidored_nitro"/>
    <property type="match status" value="1"/>
</dbReference>
<dbReference type="SUPFAM" id="SSF53807">
    <property type="entry name" value="Helical backbone' metal receptor"/>
    <property type="match status" value="1"/>
</dbReference>
<protein>
    <recommendedName>
        <fullName>Light-independent protochlorophyllide reductase subunit B</fullName>
        <shortName>DPOR subunit B</shortName>
        <shortName>LI-POR subunit B</shortName>
        <ecNumber>1.3.7.7</ecNumber>
    </recommendedName>
</protein>
<accession>P37853</accession>